<dbReference type="EC" id="3.6.1.9" evidence="1"/>
<dbReference type="EMBL" id="CP000769">
    <property type="protein sequence ID" value="ABS25573.1"/>
    <property type="molecule type" value="Genomic_DNA"/>
</dbReference>
<dbReference type="RefSeq" id="WP_011985679.1">
    <property type="nucleotide sequence ID" value="NC_009675.1"/>
</dbReference>
<dbReference type="SMR" id="A7HA27"/>
<dbReference type="STRING" id="404589.Anae109_1366"/>
<dbReference type="KEGG" id="afw:Anae109_1366"/>
<dbReference type="eggNOG" id="COG0424">
    <property type="taxonomic scope" value="Bacteria"/>
</dbReference>
<dbReference type="HOGENOM" id="CLU_040416_2_1_7"/>
<dbReference type="OrthoDB" id="9807767at2"/>
<dbReference type="Proteomes" id="UP000006382">
    <property type="component" value="Chromosome"/>
</dbReference>
<dbReference type="GO" id="GO:0005737">
    <property type="term" value="C:cytoplasm"/>
    <property type="evidence" value="ECO:0007669"/>
    <property type="project" value="UniProtKB-SubCell"/>
</dbReference>
<dbReference type="GO" id="GO:0036218">
    <property type="term" value="F:dTTP diphosphatase activity"/>
    <property type="evidence" value="ECO:0007669"/>
    <property type="project" value="RHEA"/>
</dbReference>
<dbReference type="GO" id="GO:0036221">
    <property type="term" value="F:UTP diphosphatase activity"/>
    <property type="evidence" value="ECO:0007669"/>
    <property type="project" value="RHEA"/>
</dbReference>
<dbReference type="GO" id="GO:0009117">
    <property type="term" value="P:nucleotide metabolic process"/>
    <property type="evidence" value="ECO:0007669"/>
    <property type="project" value="UniProtKB-KW"/>
</dbReference>
<dbReference type="CDD" id="cd00555">
    <property type="entry name" value="Maf"/>
    <property type="match status" value="1"/>
</dbReference>
<dbReference type="Gene3D" id="3.90.950.10">
    <property type="match status" value="1"/>
</dbReference>
<dbReference type="HAMAP" id="MF_00528">
    <property type="entry name" value="Maf"/>
    <property type="match status" value="1"/>
</dbReference>
<dbReference type="InterPro" id="IPR029001">
    <property type="entry name" value="ITPase-like_fam"/>
</dbReference>
<dbReference type="InterPro" id="IPR003697">
    <property type="entry name" value="Maf-like"/>
</dbReference>
<dbReference type="NCBIfam" id="TIGR00172">
    <property type="entry name" value="maf"/>
    <property type="match status" value="1"/>
</dbReference>
<dbReference type="PANTHER" id="PTHR43213">
    <property type="entry name" value="BIFUNCTIONAL DTTP/UTP PYROPHOSPHATASE/METHYLTRANSFERASE PROTEIN-RELATED"/>
    <property type="match status" value="1"/>
</dbReference>
<dbReference type="PANTHER" id="PTHR43213:SF5">
    <property type="entry name" value="BIFUNCTIONAL DTTP_UTP PYROPHOSPHATASE_METHYLTRANSFERASE PROTEIN-RELATED"/>
    <property type="match status" value="1"/>
</dbReference>
<dbReference type="Pfam" id="PF02545">
    <property type="entry name" value="Maf"/>
    <property type="match status" value="1"/>
</dbReference>
<dbReference type="PIRSF" id="PIRSF006305">
    <property type="entry name" value="Maf"/>
    <property type="match status" value="1"/>
</dbReference>
<dbReference type="SUPFAM" id="SSF52972">
    <property type="entry name" value="ITPase-like"/>
    <property type="match status" value="1"/>
</dbReference>
<evidence type="ECO:0000255" key="1">
    <source>
        <dbReference type="HAMAP-Rule" id="MF_00528"/>
    </source>
</evidence>
<gene>
    <name type="ordered locus">Anae109_1366</name>
</gene>
<keyword id="KW-0963">Cytoplasm</keyword>
<keyword id="KW-0378">Hydrolase</keyword>
<keyword id="KW-0546">Nucleotide metabolism</keyword>
<keyword id="KW-1185">Reference proteome</keyword>
<comment type="function">
    <text evidence="1">Nucleoside triphosphate pyrophosphatase that hydrolyzes dTTP and UTP. May have a dual role in cell division arrest and in preventing the incorporation of modified nucleotides into cellular nucleic acids.</text>
</comment>
<comment type="catalytic activity">
    <reaction evidence="1">
        <text>dTTP + H2O = dTMP + diphosphate + H(+)</text>
        <dbReference type="Rhea" id="RHEA:28534"/>
        <dbReference type="ChEBI" id="CHEBI:15377"/>
        <dbReference type="ChEBI" id="CHEBI:15378"/>
        <dbReference type="ChEBI" id="CHEBI:33019"/>
        <dbReference type="ChEBI" id="CHEBI:37568"/>
        <dbReference type="ChEBI" id="CHEBI:63528"/>
        <dbReference type="EC" id="3.6.1.9"/>
    </reaction>
</comment>
<comment type="catalytic activity">
    <reaction evidence="1">
        <text>UTP + H2O = UMP + diphosphate + H(+)</text>
        <dbReference type="Rhea" id="RHEA:29395"/>
        <dbReference type="ChEBI" id="CHEBI:15377"/>
        <dbReference type="ChEBI" id="CHEBI:15378"/>
        <dbReference type="ChEBI" id="CHEBI:33019"/>
        <dbReference type="ChEBI" id="CHEBI:46398"/>
        <dbReference type="ChEBI" id="CHEBI:57865"/>
        <dbReference type="EC" id="3.6.1.9"/>
    </reaction>
</comment>
<comment type="cofactor">
    <cofactor evidence="1">
        <name>a divalent metal cation</name>
        <dbReference type="ChEBI" id="CHEBI:60240"/>
    </cofactor>
</comment>
<comment type="subcellular location">
    <subcellularLocation>
        <location evidence="1">Cytoplasm</location>
    </subcellularLocation>
</comment>
<comment type="similarity">
    <text evidence="1">Belongs to the Maf family. YhdE subfamily.</text>
</comment>
<accession>A7HA27</accession>
<protein>
    <recommendedName>
        <fullName evidence="1">dTTP/UTP pyrophosphatase</fullName>
        <shortName evidence="1">dTTPase/UTPase</shortName>
        <ecNumber evidence="1">3.6.1.9</ecNumber>
    </recommendedName>
    <alternativeName>
        <fullName evidence="1">Nucleoside triphosphate pyrophosphatase</fullName>
    </alternativeName>
    <alternativeName>
        <fullName evidence="1">Nucleotide pyrophosphatase</fullName>
        <shortName evidence="1">Nucleotide PPase</shortName>
    </alternativeName>
</protein>
<sequence>MAFRLVLASQSPRRRELLDQLGVAHEVRPANTDESVHPGEPARAYVLRVAREKARAVEGELVLAADTAVVLRGEVLGKPRDAEDARRMLAALSGTAHEVLTGVCVRRRPGRGSAVELDAVVSTAVRFAPLGPAEISWYVATGEPLDKAGAYAIQGVGGAFVLGVEGSVSNVVGLPLAETAELLRRAGHPLPWDAPGGPAQGGGAP</sequence>
<proteinExistence type="inferred from homology"/>
<reference key="1">
    <citation type="journal article" date="2015" name="Genome Announc.">
        <title>Complete genome sequence of Anaeromyxobacter sp. Fw109-5, an anaerobic, metal-reducing bacterium isolated from a contaminated subsurface environment.</title>
        <authorList>
            <person name="Hwang C."/>
            <person name="Copeland A."/>
            <person name="Lucas S."/>
            <person name="Lapidus A."/>
            <person name="Barry K."/>
            <person name="Glavina Del Rio T."/>
            <person name="Dalin E."/>
            <person name="Tice H."/>
            <person name="Pitluck S."/>
            <person name="Sims D."/>
            <person name="Brettin T."/>
            <person name="Bruce D.C."/>
            <person name="Detter J.C."/>
            <person name="Han C.S."/>
            <person name="Schmutz J."/>
            <person name="Larimer F.W."/>
            <person name="Land M.L."/>
            <person name="Hauser L.J."/>
            <person name="Kyrpides N."/>
            <person name="Lykidis A."/>
            <person name="Richardson P."/>
            <person name="Belieav A."/>
            <person name="Sanford R.A."/>
            <person name="Loeffler F.E."/>
            <person name="Fields M.W."/>
        </authorList>
    </citation>
    <scope>NUCLEOTIDE SEQUENCE [LARGE SCALE GENOMIC DNA]</scope>
    <source>
        <strain>Fw109-5</strain>
    </source>
</reference>
<feature type="chain" id="PRO_1000060931" description="dTTP/UTP pyrophosphatase">
    <location>
        <begin position="1"/>
        <end position="205"/>
    </location>
</feature>
<feature type="active site" description="Proton acceptor" evidence="1">
    <location>
        <position position="66"/>
    </location>
</feature>
<feature type="site" description="Important for substrate specificity" evidence="1">
    <location>
        <position position="13"/>
    </location>
</feature>
<feature type="site" description="Important for substrate specificity" evidence="1">
    <location>
        <position position="67"/>
    </location>
</feature>
<feature type="site" description="Important for substrate specificity" evidence="1">
    <location>
        <position position="154"/>
    </location>
</feature>
<organism>
    <name type="scientific">Anaeromyxobacter sp. (strain Fw109-5)</name>
    <dbReference type="NCBI Taxonomy" id="404589"/>
    <lineage>
        <taxon>Bacteria</taxon>
        <taxon>Pseudomonadati</taxon>
        <taxon>Myxococcota</taxon>
        <taxon>Myxococcia</taxon>
        <taxon>Myxococcales</taxon>
        <taxon>Cystobacterineae</taxon>
        <taxon>Anaeromyxobacteraceae</taxon>
        <taxon>Anaeromyxobacter</taxon>
    </lineage>
</organism>
<name>NTPPA_ANADF</name>